<keyword id="KW-0997">Cell inner membrane</keyword>
<keyword id="KW-1003">Cell membrane</keyword>
<keyword id="KW-0460">Magnesium</keyword>
<keyword id="KW-0472">Membrane</keyword>
<keyword id="KW-1185">Reference proteome</keyword>
<keyword id="KW-0808">Transferase</keyword>
<keyword id="KW-0812">Transmembrane</keyword>
<keyword id="KW-1133">Transmembrane helix</keyword>
<keyword id="KW-0831">Ubiquinone biosynthesis</keyword>
<name>UBIA_PSEPK</name>
<protein>
    <recommendedName>
        <fullName evidence="1">4-hydroxybenzoate octaprenyltransferase</fullName>
        <ecNumber evidence="1">2.5.1.39</ecNumber>
    </recommendedName>
    <alternativeName>
        <fullName evidence="1">4-HB polyprenyltransferase</fullName>
    </alternativeName>
</protein>
<gene>
    <name evidence="1" type="primary">ubiA</name>
    <name type="ordered locus">PP_5318</name>
</gene>
<proteinExistence type="inferred from homology"/>
<sequence length="296" mass="32936">MYLQLLKSLNRLHPRAWDFVQLSRMDRPIGIYLLLWPTLSAVWIAGNGSPTLANVLIFGLGVVLMRAAGCCINDFADRKVDGHVKRTADRPLASGRVRPREALTLFAILVGVSFLLVLCTNSRTVWLSFGAVALAFCYPFMKRYTYYPQVVLGAAYSWGIPMAFTAAGGELPAGAWLLYIANLLWTVGYDTYYAMVDRDDDLKIGVKSTAILFGDADRSIILTLQLLSLGCLLLAGSRFDLGGWFHLGLLGAAACFAWEYWSTRKLDRESCFKAFLHNHWAGMLVFIGVVLDYALR</sequence>
<organism>
    <name type="scientific">Pseudomonas putida (strain ATCC 47054 / DSM 6125 / CFBP 8728 / NCIMB 11950 / KT2440)</name>
    <dbReference type="NCBI Taxonomy" id="160488"/>
    <lineage>
        <taxon>Bacteria</taxon>
        <taxon>Pseudomonadati</taxon>
        <taxon>Pseudomonadota</taxon>
        <taxon>Gammaproteobacteria</taxon>
        <taxon>Pseudomonadales</taxon>
        <taxon>Pseudomonadaceae</taxon>
        <taxon>Pseudomonas</taxon>
    </lineage>
</organism>
<dbReference type="EC" id="2.5.1.39" evidence="1"/>
<dbReference type="EMBL" id="AE015451">
    <property type="protein sequence ID" value="AAN70883.1"/>
    <property type="molecule type" value="Genomic_DNA"/>
</dbReference>
<dbReference type="RefSeq" id="NP_747419.1">
    <property type="nucleotide sequence ID" value="NC_002947.4"/>
</dbReference>
<dbReference type="RefSeq" id="WP_004575206.1">
    <property type="nucleotide sequence ID" value="NZ_CP169744.1"/>
</dbReference>
<dbReference type="SMR" id="Q88C65"/>
<dbReference type="STRING" id="160488.PP_5318"/>
<dbReference type="PaxDb" id="160488-PP_5318"/>
<dbReference type="GeneID" id="83683124"/>
<dbReference type="KEGG" id="ppu:PP_5318"/>
<dbReference type="PATRIC" id="fig|160488.4.peg.5670"/>
<dbReference type="eggNOG" id="COG0382">
    <property type="taxonomic scope" value="Bacteria"/>
</dbReference>
<dbReference type="HOGENOM" id="CLU_034879_1_0_6"/>
<dbReference type="OrthoDB" id="9782418at2"/>
<dbReference type="PhylomeDB" id="Q88C65"/>
<dbReference type="BioCyc" id="MetaCyc:MONOMER-13869"/>
<dbReference type="BioCyc" id="PPUT160488:G1G01-5674-MONOMER"/>
<dbReference type="UniPathway" id="UPA00232"/>
<dbReference type="Proteomes" id="UP000000556">
    <property type="component" value="Chromosome"/>
</dbReference>
<dbReference type="GO" id="GO:0005886">
    <property type="term" value="C:plasma membrane"/>
    <property type="evidence" value="ECO:0007669"/>
    <property type="project" value="UniProtKB-SubCell"/>
</dbReference>
<dbReference type="GO" id="GO:0008412">
    <property type="term" value="F:4-hydroxybenzoate polyprenyltransferase activity"/>
    <property type="evidence" value="ECO:0007669"/>
    <property type="project" value="UniProtKB-UniRule"/>
</dbReference>
<dbReference type="GO" id="GO:0006744">
    <property type="term" value="P:ubiquinone biosynthetic process"/>
    <property type="evidence" value="ECO:0007669"/>
    <property type="project" value="UniProtKB-UniRule"/>
</dbReference>
<dbReference type="CDD" id="cd13959">
    <property type="entry name" value="PT_UbiA_COQ2"/>
    <property type="match status" value="1"/>
</dbReference>
<dbReference type="FunFam" id="1.10.357.140:FF:000002">
    <property type="entry name" value="4-hydroxybenzoate octaprenyltransferase"/>
    <property type="match status" value="1"/>
</dbReference>
<dbReference type="FunFam" id="1.20.120.1780:FF:000001">
    <property type="entry name" value="4-hydroxybenzoate octaprenyltransferase"/>
    <property type="match status" value="1"/>
</dbReference>
<dbReference type="Gene3D" id="1.10.357.140">
    <property type="entry name" value="UbiA prenyltransferase"/>
    <property type="match status" value="1"/>
</dbReference>
<dbReference type="Gene3D" id="1.20.120.1780">
    <property type="entry name" value="UbiA prenyltransferase"/>
    <property type="match status" value="1"/>
</dbReference>
<dbReference type="HAMAP" id="MF_01635">
    <property type="entry name" value="UbiA"/>
    <property type="match status" value="1"/>
</dbReference>
<dbReference type="InterPro" id="IPR006370">
    <property type="entry name" value="HB_polyprenyltransferase-like"/>
</dbReference>
<dbReference type="InterPro" id="IPR039653">
    <property type="entry name" value="Prenyltransferase"/>
</dbReference>
<dbReference type="InterPro" id="IPR000537">
    <property type="entry name" value="UbiA_prenyltransferase"/>
</dbReference>
<dbReference type="InterPro" id="IPR044878">
    <property type="entry name" value="UbiA_sf"/>
</dbReference>
<dbReference type="NCBIfam" id="TIGR01474">
    <property type="entry name" value="ubiA_proteo"/>
    <property type="match status" value="1"/>
</dbReference>
<dbReference type="PANTHER" id="PTHR11048:SF28">
    <property type="entry name" value="4-HYDROXYBENZOATE POLYPRENYLTRANSFERASE, MITOCHONDRIAL"/>
    <property type="match status" value="1"/>
</dbReference>
<dbReference type="PANTHER" id="PTHR11048">
    <property type="entry name" value="PRENYLTRANSFERASES"/>
    <property type="match status" value="1"/>
</dbReference>
<dbReference type="Pfam" id="PF01040">
    <property type="entry name" value="UbiA"/>
    <property type="match status" value="1"/>
</dbReference>
<reference key="1">
    <citation type="journal article" date="2002" name="Environ. Microbiol.">
        <title>Complete genome sequence and comparative analysis of the metabolically versatile Pseudomonas putida KT2440.</title>
        <authorList>
            <person name="Nelson K.E."/>
            <person name="Weinel C."/>
            <person name="Paulsen I.T."/>
            <person name="Dodson R.J."/>
            <person name="Hilbert H."/>
            <person name="Martins dos Santos V.A.P."/>
            <person name="Fouts D.E."/>
            <person name="Gill S.R."/>
            <person name="Pop M."/>
            <person name="Holmes M."/>
            <person name="Brinkac L.M."/>
            <person name="Beanan M.J."/>
            <person name="DeBoy R.T."/>
            <person name="Daugherty S.C."/>
            <person name="Kolonay J.F."/>
            <person name="Madupu R."/>
            <person name="Nelson W.C."/>
            <person name="White O."/>
            <person name="Peterson J.D."/>
            <person name="Khouri H.M."/>
            <person name="Hance I."/>
            <person name="Chris Lee P."/>
            <person name="Holtzapple E.K."/>
            <person name="Scanlan D."/>
            <person name="Tran K."/>
            <person name="Moazzez A."/>
            <person name="Utterback T.R."/>
            <person name="Rizzo M."/>
            <person name="Lee K."/>
            <person name="Kosack D."/>
            <person name="Moestl D."/>
            <person name="Wedler H."/>
            <person name="Lauber J."/>
            <person name="Stjepandic D."/>
            <person name="Hoheisel J."/>
            <person name="Straetz M."/>
            <person name="Heim S."/>
            <person name="Kiewitz C."/>
            <person name="Eisen J.A."/>
            <person name="Timmis K.N."/>
            <person name="Duesterhoeft A."/>
            <person name="Tuemmler B."/>
            <person name="Fraser C.M."/>
        </authorList>
    </citation>
    <scope>NUCLEOTIDE SEQUENCE [LARGE SCALE GENOMIC DNA]</scope>
    <source>
        <strain>ATCC 47054 / DSM 6125 / CFBP 8728 / NCIMB 11950 / KT2440</strain>
    </source>
</reference>
<feature type="chain" id="PRO_0000262822" description="4-hydroxybenzoate octaprenyltransferase">
    <location>
        <begin position="1"/>
        <end position="296"/>
    </location>
</feature>
<feature type="transmembrane region" description="Helical" evidence="1">
    <location>
        <begin position="28"/>
        <end position="48"/>
    </location>
</feature>
<feature type="transmembrane region" description="Helical" evidence="1">
    <location>
        <begin position="52"/>
        <end position="72"/>
    </location>
</feature>
<feature type="transmembrane region" description="Helical" evidence="1">
    <location>
        <begin position="102"/>
        <end position="122"/>
    </location>
</feature>
<feature type="transmembrane region" description="Helical" evidence="1">
    <location>
        <begin position="145"/>
        <end position="167"/>
    </location>
</feature>
<feature type="transmembrane region" description="Helical" evidence="1">
    <location>
        <begin position="174"/>
        <end position="196"/>
    </location>
</feature>
<feature type="transmembrane region" description="Helical" evidence="1">
    <location>
        <begin position="219"/>
        <end position="239"/>
    </location>
</feature>
<feature type="transmembrane region" description="Helical" evidence="1">
    <location>
        <begin position="241"/>
        <end position="261"/>
    </location>
</feature>
<feature type="transmembrane region" description="Helical" evidence="1">
    <location>
        <begin position="275"/>
        <end position="295"/>
    </location>
</feature>
<accession>Q88C65</accession>
<evidence type="ECO:0000255" key="1">
    <source>
        <dbReference type="HAMAP-Rule" id="MF_01635"/>
    </source>
</evidence>
<comment type="function">
    <text evidence="1">Catalyzes the prenylation of para-hydroxybenzoate (PHB) with an all-trans polyprenyl group. Mediates the second step in the final reaction sequence of ubiquinone-8 (UQ-8) biosynthesis, which is the condensation of the polyisoprenoid side chain with PHB, generating the first membrane-bound Q intermediate 3-octaprenyl-4-hydroxybenzoate.</text>
</comment>
<comment type="catalytic activity">
    <reaction evidence="1">
        <text>all-trans-octaprenyl diphosphate + 4-hydroxybenzoate = 4-hydroxy-3-(all-trans-octaprenyl)benzoate + diphosphate</text>
        <dbReference type="Rhea" id="RHEA:27782"/>
        <dbReference type="ChEBI" id="CHEBI:1617"/>
        <dbReference type="ChEBI" id="CHEBI:17879"/>
        <dbReference type="ChEBI" id="CHEBI:33019"/>
        <dbReference type="ChEBI" id="CHEBI:57711"/>
        <dbReference type="EC" id="2.5.1.39"/>
    </reaction>
</comment>
<comment type="cofactor">
    <cofactor evidence="1">
        <name>Mg(2+)</name>
        <dbReference type="ChEBI" id="CHEBI:18420"/>
    </cofactor>
</comment>
<comment type="pathway">
    <text evidence="1">Cofactor biosynthesis; ubiquinone biosynthesis.</text>
</comment>
<comment type="subcellular location">
    <subcellularLocation>
        <location evidence="1">Cell inner membrane</location>
        <topology evidence="1">Multi-pass membrane protein</topology>
    </subcellularLocation>
</comment>
<comment type="similarity">
    <text evidence="1">Belongs to the UbiA prenyltransferase family.</text>
</comment>